<proteinExistence type="inferred from homology"/>
<dbReference type="EC" id="2.1.1.166" evidence="1"/>
<dbReference type="EMBL" id="CU928160">
    <property type="protein sequence ID" value="CAR00141.1"/>
    <property type="molecule type" value="Genomic_DNA"/>
</dbReference>
<dbReference type="RefSeq" id="WP_000145975.1">
    <property type="nucleotide sequence ID" value="NC_011741.1"/>
</dbReference>
<dbReference type="SMR" id="B7M085"/>
<dbReference type="GeneID" id="93778802"/>
<dbReference type="KEGG" id="ecr:ECIAI1_3327"/>
<dbReference type="HOGENOM" id="CLU_009422_4_0_6"/>
<dbReference type="GO" id="GO:0005737">
    <property type="term" value="C:cytoplasm"/>
    <property type="evidence" value="ECO:0007669"/>
    <property type="project" value="UniProtKB-SubCell"/>
</dbReference>
<dbReference type="GO" id="GO:0008650">
    <property type="term" value="F:rRNA (uridine-2'-O-)-methyltransferase activity"/>
    <property type="evidence" value="ECO:0007669"/>
    <property type="project" value="UniProtKB-UniRule"/>
</dbReference>
<dbReference type="CDD" id="cd02440">
    <property type="entry name" value="AdoMet_MTases"/>
    <property type="match status" value="1"/>
</dbReference>
<dbReference type="FunFam" id="3.40.50.150:FF:000005">
    <property type="entry name" value="Ribosomal RNA large subunit methyltransferase E"/>
    <property type="match status" value="1"/>
</dbReference>
<dbReference type="Gene3D" id="3.40.50.150">
    <property type="entry name" value="Vaccinia Virus protein VP39"/>
    <property type="match status" value="1"/>
</dbReference>
<dbReference type="HAMAP" id="MF_01547">
    <property type="entry name" value="RNA_methyltr_E"/>
    <property type="match status" value="1"/>
</dbReference>
<dbReference type="InterPro" id="IPR050082">
    <property type="entry name" value="RNA_methyltr_RlmE"/>
</dbReference>
<dbReference type="InterPro" id="IPR002877">
    <property type="entry name" value="RNA_MeTrfase_FtsJ_dom"/>
</dbReference>
<dbReference type="InterPro" id="IPR015507">
    <property type="entry name" value="rRNA-MeTfrase_E"/>
</dbReference>
<dbReference type="InterPro" id="IPR004512">
    <property type="entry name" value="rRNA_MeTrfase_gammaproteobac"/>
</dbReference>
<dbReference type="InterPro" id="IPR029063">
    <property type="entry name" value="SAM-dependent_MTases_sf"/>
</dbReference>
<dbReference type="NCBIfam" id="NF008390">
    <property type="entry name" value="PRK11188.1"/>
    <property type="match status" value="1"/>
</dbReference>
<dbReference type="NCBIfam" id="TIGR00438">
    <property type="entry name" value="rrmJ"/>
    <property type="match status" value="1"/>
</dbReference>
<dbReference type="PANTHER" id="PTHR10920">
    <property type="entry name" value="RIBOSOMAL RNA METHYLTRANSFERASE"/>
    <property type="match status" value="1"/>
</dbReference>
<dbReference type="PANTHER" id="PTHR10920:SF18">
    <property type="entry name" value="RRNA METHYLTRANSFERASE 2, MITOCHONDRIAL"/>
    <property type="match status" value="1"/>
</dbReference>
<dbReference type="Pfam" id="PF01728">
    <property type="entry name" value="FtsJ"/>
    <property type="match status" value="1"/>
</dbReference>
<dbReference type="PIRSF" id="PIRSF005461">
    <property type="entry name" value="23S_rRNA_mtase"/>
    <property type="match status" value="1"/>
</dbReference>
<dbReference type="SUPFAM" id="SSF53335">
    <property type="entry name" value="S-adenosyl-L-methionine-dependent methyltransferases"/>
    <property type="match status" value="1"/>
</dbReference>
<protein>
    <recommendedName>
        <fullName evidence="1">Ribosomal RNA large subunit methyltransferase E</fullName>
        <ecNumber evidence="1">2.1.1.166</ecNumber>
    </recommendedName>
    <alternativeName>
        <fullName evidence="1">23S rRNA Um2552 methyltransferase</fullName>
    </alternativeName>
    <alternativeName>
        <fullName evidence="1">rRNA (uridine-2'-O-)-methyltransferase</fullName>
    </alternativeName>
</protein>
<keyword id="KW-0963">Cytoplasm</keyword>
<keyword id="KW-0489">Methyltransferase</keyword>
<keyword id="KW-0698">rRNA processing</keyword>
<keyword id="KW-0949">S-adenosyl-L-methionine</keyword>
<keyword id="KW-0808">Transferase</keyword>
<sequence>MTGKKRSASSSRWLQEHFSDKYVQQAQKKGLRSRAWFKLDEIQQSDKLFKPGMTVVDLGAAPGGWSQYVVTQIGGKGRIIACDLLPMDPIVGVDFLQGDFRDELVMKALLERVGDSKVQVVMSDMAPNMSGTPAVDIPRAMYLVELALEMCRDVLAPGGSFVVKVFQGEGFDEYLREIRSLFTKVKVRKPDSSRARSREVYIVATGRKP</sequence>
<gene>
    <name evidence="1" type="primary">rlmE</name>
    <name evidence="1" type="synonym">ftsJ</name>
    <name evidence="1" type="synonym">rrmJ</name>
    <name type="ordered locus">ECIAI1_3327</name>
</gene>
<name>RLME_ECO8A</name>
<reference key="1">
    <citation type="journal article" date="2009" name="PLoS Genet.">
        <title>Organised genome dynamics in the Escherichia coli species results in highly diverse adaptive paths.</title>
        <authorList>
            <person name="Touchon M."/>
            <person name="Hoede C."/>
            <person name="Tenaillon O."/>
            <person name="Barbe V."/>
            <person name="Baeriswyl S."/>
            <person name="Bidet P."/>
            <person name="Bingen E."/>
            <person name="Bonacorsi S."/>
            <person name="Bouchier C."/>
            <person name="Bouvet O."/>
            <person name="Calteau A."/>
            <person name="Chiapello H."/>
            <person name="Clermont O."/>
            <person name="Cruveiller S."/>
            <person name="Danchin A."/>
            <person name="Diard M."/>
            <person name="Dossat C."/>
            <person name="Karoui M.E."/>
            <person name="Frapy E."/>
            <person name="Garry L."/>
            <person name="Ghigo J.M."/>
            <person name="Gilles A.M."/>
            <person name="Johnson J."/>
            <person name="Le Bouguenec C."/>
            <person name="Lescat M."/>
            <person name="Mangenot S."/>
            <person name="Martinez-Jehanne V."/>
            <person name="Matic I."/>
            <person name="Nassif X."/>
            <person name="Oztas S."/>
            <person name="Petit M.A."/>
            <person name="Pichon C."/>
            <person name="Rouy Z."/>
            <person name="Ruf C.S."/>
            <person name="Schneider D."/>
            <person name="Tourret J."/>
            <person name="Vacherie B."/>
            <person name="Vallenet D."/>
            <person name="Medigue C."/>
            <person name="Rocha E.P.C."/>
            <person name="Denamur E."/>
        </authorList>
    </citation>
    <scope>NUCLEOTIDE SEQUENCE [LARGE SCALE GENOMIC DNA]</scope>
    <source>
        <strain>IAI1</strain>
    </source>
</reference>
<feature type="chain" id="PRO_1000194998" description="Ribosomal RNA large subunit methyltransferase E">
    <location>
        <begin position="1"/>
        <end position="209"/>
    </location>
</feature>
<feature type="active site" description="Proton acceptor" evidence="1">
    <location>
        <position position="164"/>
    </location>
</feature>
<feature type="binding site" evidence="1">
    <location>
        <position position="63"/>
    </location>
    <ligand>
        <name>S-adenosyl-L-methionine</name>
        <dbReference type="ChEBI" id="CHEBI:59789"/>
    </ligand>
</feature>
<feature type="binding site" evidence="1">
    <location>
        <position position="65"/>
    </location>
    <ligand>
        <name>S-adenosyl-L-methionine</name>
        <dbReference type="ChEBI" id="CHEBI:59789"/>
    </ligand>
</feature>
<feature type="binding site" evidence="1">
    <location>
        <position position="83"/>
    </location>
    <ligand>
        <name>S-adenosyl-L-methionine</name>
        <dbReference type="ChEBI" id="CHEBI:59789"/>
    </ligand>
</feature>
<feature type="binding site" evidence="1">
    <location>
        <position position="99"/>
    </location>
    <ligand>
        <name>S-adenosyl-L-methionine</name>
        <dbReference type="ChEBI" id="CHEBI:59789"/>
    </ligand>
</feature>
<feature type="binding site" evidence="1">
    <location>
        <position position="124"/>
    </location>
    <ligand>
        <name>S-adenosyl-L-methionine</name>
        <dbReference type="ChEBI" id="CHEBI:59789"/>
    </ligand>
</feature>
<accession>B7M085</accession>
<evidence type="ECO:0000255" key="1">
    <source>
        <dbReference type="HAMAP-Rule" id="MF_01547"/>
    </source>
</evidence>
<organism>
    <name type="scientific">Escherichia coli O8 (strain IAI1)</name>
    <dbReference type="NCBI Taxonomy" id="585034"/>
    <lineage>
        <taxon>Bacteria</taxon>
        <taxon>Pseudomonadati</taxon>
        <taxon>Pseudomonadota</taxon>
        <taxon>Gammaproteobacteria</taxon>
        <taxon>Enterobacterales</taxon>
        <taxon>Enterobacteriaceae</taxon>
        <taxon>Escherichia</taxon>
    </lineage>
</organism>
<comment type="function">
    <text evidence="1">Specifically methylates the uridine in position 2552 of 23S rRNA at the 2'-O position of the ribose in the fully assembled 50S ribosomal subunit.</text>
</comment>
<comment type="catalytic activity">
    <reaction evidence="1">
        <text>uridine(2552) in 23S rRNA + S-adenosyl-L-methionine = 2'-O-methyluridine(2552) in 23S rRNA + S-adenosyl-L-homocysteine + H(+)</text>
        <dbReference type="Rhea" id="RHEA:42720"/>
        <dbReference type="Rhea" id="RHEA-COMP:10202"/>
        <dbReference type="Rhea" id="RHEA-COMP:10203"/>
        <dbReference type="ChEBI" id="CHEBI:15378"/>
        <dbReference type="ChEBI" id="CHEBI:57856"/>
        <dbReference type="ChEBI" id="CHEBI:59789"/>
        <dbReference type="ChEBI" id="CHEBI:65315"/>
        <dbReference type="ChEBI" id="CHEBI:74478"/>
        <dbReference type="EC" id="2.1.1.166"/>
    </reaction>
</comment>
<comment type="subcellular location">
    <subcellularLocation>
        <location evidence="1">Cytoplasm</location>
    </subcellularLocation>
</comment>
<comment type="similarity">
    <text evidence="1">Belongs to the class I-like SAM-binding methyltransferase superfamily. RNA methyltransferase RlmE family.</text>
</comment>